<name>EFTU1_ORITB</name>
<evidence type="ECO:0000250" key="1"/>
<evidence type="ECO:0000255" key="2">
    <source>
        <dbReference type="HAMAP-Rule" id="MF_00118"/>
    </source>
</evidence>
<comment type="function">
    <text evidence="2">GTP hydrolase that promotes the GTP-dependent binding of aminoacyl-tRNA to the A-site of ribosomes during protein biosynthesis.</text>
</comment>
<comment type="catalytic activity">
    <reaction evidence="2">
        <text>GTP + H2O = GDP + phosphate + H(+)</text>
        <dbReference type="Rhea" id="RHEA:19669"/>
        <dbReference type="ChEBI" id="CHEBI:15377"/>
        <dbReference type="ChEBI" id="CHEBI:15378"/>
        <dbReference type="ChEBI" id="CHEBI:37565"/>
        <dbReference type="ChEBI" id="CHEBI:43474"/>
        <dbReference type="ChEBI" id="CHEBI:58189"/>
        <dbReference type="EC" id="3.6.5.3"/>
    </reaction>
    <physiologicalReaction direction="left-to-right" evidence="2">
        <dbReference type="Rhea" id="RHEA:19670"/>
    </physiologicalReaction>
</comment>
<comment type="subunit">
    <text evidence="2">Monomer.</text>
</comment>
<comment type="subcellular location">
    <subcellularLocation>
        <location evidence="2">Cytoplasm</location>
    </subcellularLocation>
</comment>
<comment type="similarity">
    <text evidence="2">Belongs to the TRAFAC class translation factor GTPase superfamily. Classic translation factor GTPase family. EF-Tu/EF-1A subfamily.</text>
</comment>
<proteinExistence type="inferred from homology"/>
<dbReference type="EC" id="3.6.5.3" evidence="2"/>
<dbReference type="EMBL" id="AM494475">
    <property type="protein sequence ID" value="CAM79281.1"/>
    <property type="molecule type" value="Genomic_DNA"/>
</dbReference>
<dbReference type="RefSeq" id="WP_011944339.1">
    <property type="nucleotide sequence ID" value="NC_009488.1"/>
</dbReference>
<dbReference type="SMR" id="A5CCA0"/>
<dbReference type="KEGG" id="ots:OTBS_0215"/>
<dbReference type="eggNOG" id="COG0050">
    <property type="taxonomic scope" value="Bacteria"/>
</dbReference>
<dbReference type="HOGENOM" id="CLU_007265_0_1_5"/>
<dbReference type="Proteomes" id="UP000001565">
    <property type="component" value="Chromosome"/>
</dbReference>
<dbReference type="GO" id="GO:0005737">
    <property type="term" value="C:cytoplasm"/>
    <property type="evidence" value="ECO:0007669"/>
    <property type="project" value="UniProtKB-SubCell"/>
</dbReference>
<dbReference type="GO" id="GO:0005525">
    <property type="term" value="F:GTP binding"/>
    <property type="evidence" value="ECO:0007669"/>
    <property type="project" value="UniProtKB-UniRule"/>
</dbReference>
<dbReference type="GO" id="GO:0003924">
    <property type="term" value="F:GTPase activity"/>
    <property type="evidence" value="ECO:0007669"/>
    <property type="project" value="InterPro"/>
</dbReference>
<dbReference type="GO" id="GO:0097216">
    <property type="term" value="F:guanosine tetraphosphate binding"/>
    <property type="evidence" value="ECO:0007669"/>
    <property type="project" value="UniProtKB-ARBA"/>
</dbReference>
<dbReference type="GO" id="GO:0003746">
    <property type="term" value="F:translation elongation factor activity"/>
    <property type="evidence" value="ECO:0007669"/>
    <property type="project" value="UniProtKB-UniRule"/>
</dbReference>
<dbReference type="CDD" id="cd01884">
    <property type="entry name" value="EF_Tu"/>
    <property type="match status" value="1"/>
</dbReference>
<dbReference type="CDD" id="cd03697">
    <property type="entry name" value="EFTU_II"/>
    <property type="match status" value="1"/>
</dbReference>
<dbReference type="CDD" id="cd03707">
    <property type="entry name" value="EFTU_III"/>
    <property type="match status" value="1"/>
</dbReference>
<dbReference type="FunFam" id="2.40.30.10:FF:000001">
    <property type="entry name" value="Elongation factor Tu"/>
    <property type="match status" value="1"/>
</dbReference>
<dbReference type="FunFam" id="3.40.50.300:FF:000003">
    <property type="entry name" value="Elongation factor Tu"/>
    <property type="match status" value="1"/>
</dbReference>
<dbReference type="Gene3D" id="3.40.50.300">
    <property type="entry name" value="P-loop containing nucleotide triphosphate hydrolases"/>
    <property type="match status" value="1"/>
</dbReference>
<dbReference type="Gene3D" id="2.40.30.10">
    <property type="entry name" value="Translation factors"/>
    <property type="match status" value="2"/>
</dbReference>
<dbReference type="HAMAP" id="MF_00118_B">
    <property type="entry name" value="EF_Tu_B"/>
    <property type="match status" value="1"/>
</dbReference>
<dbReference type="InterPro" id="IPR041709">
    <property type="entry name" value="EF-Tu_GTP-bd"/>
</dbReference>
<dbReference type="InterPro" id="IPR050055">
    <property type="entry name" value="EF-Tu_GTPase"/>
</dbReference>
<dbReference type="InterPro" id="IPR004161">
    <property type="entry name" value="EFTu-like_2"/>
</dbReference>
<dbReference type="InterPro" id="IPR033720">
    <property type="entry name" value="EFTU_2"/>
</dbReference>
<dbReference type="InterPro" id="IPR031157">
    <property type="entry name" value="G_TR_CS"/>
</dbReference>
<dbReference type="InterPro" id="IPR027417">
    <property type="entry name" value="P-loop_NTPase"/>
</dbReference>
<dbReference type="InterPro" id="IPR005225">
    <property type="entry name" value="Small_GTP-bd"/>
</dbReference>
<dbReference type="InterPro" id="IPR000795">
    <property type="entry name" value="T_Tr_GTP-bd_dom"/>
</dbReference>
<dbReference type="InterPro" id="IPR009000">
    <property type="entry name" value="Transl_B-barrel_sf"/>
</dbReference>
<dbReference type="InterPro" id="IPR009001">
    <property type="entry name" value="Transl_elong_EF1A/Init_IF2_C"/>
</dbReference>
<dbReference type="InterPro" id="IPR004541">
    <property type="entry name" value="Transl_elong_EFTu/EF1A_bac/org"/>
</dbReference>
<dbReference type="InterPro" id="IPR004160">
    <property type="entry name" value="Transl_elong_EFTu/EF1A_C"/>
</dbReference>
<dbReference type="NCBIfam" id="TIGR00485">
    <property type="entry name" value="EF-Tu"/>
    <property type="match status" value="1"/>
</dbReference>
<dbReference type="NCBIfam" id="NF000766">
    <property type="entry name" value="PRK00049.1"/>
    <property type="match status" value="1"/>
</dbReference>
<dbReference type="NCBIfam" id="NF009372">
    <property type="entry name" value="PRK12735.1"/>
    <property type="match status" value="1"/>
</dbReference>
<dbReference type="NCBIfam" id="NF009373">
    <property type="entry name" value="PRK12736.1"/>
    <property type="match status" value="1"/>
</dbReference>
<dbReference type="NCBIfam" id="TIGR00231">
    <property type="entry name" value="small_GTP"/>
    <property type="match status" value="1"/>
</dbReference>
<dbReference type="PANTHER" id="PTHR43721:SF22">
    <property type="entry name" value="ELONGATION FACTOR TU, MITOCHONDRIAL"/>
    <property type="match status" value="1"/>
</dbReference>
<dbReference type="PANTHER" id="PTHR43721">
    <property type="entry name" value="ELONGATION FACTOR TU-RELATED"/>
    <property type="match status" value="1"/>
</dbReference>
<dbReference type="Pfam" id="PF00009">
    <property type="entry name" value="GTP_EFTU"/>
    <property type="match status" value="1"/>
</dbReference>
<dbReference type="Pfam" id="PF03144">
    <property type="entry name" value="GTP_EFTU_D2"/>
    <property type="match status" value="1"/>
</dbReference>
<dbReference type="Pfam" id="PF03143">
    <property type="entry name" value="GTP_EFTU_D3"/>
    <property type="match status" value="1"/>
</dbReference>
<dbReference type="PRINTS" id="PR00315">
    <property type="entry name" value="ELONGATNFCT"/>
</dbReference>
<dbReference type="SUPFAM" id="SSF50465">
    <property type="entry name" value="EF-Tu/eEF-1alpha/eIF2-gamma C-terminal domain"/>
    <property type="match status" value="1"/>
</dbReference>
<dbReference type="SUPFAM" id="SSF52540">
    <property type="entry name" value="P-loop containing nucleoside triphosphate hydrolases"/>
    <property type="match status" value="1"/>
</dbReference>
<dbReference type="SUPFAM" id="SSF50447">
    <property type="entry name" value="Translation proteins"/>
    <property type="match status" value="1"/>
</dbReference>
<dbReference type="PROSITE" id="PS00301">
    <property type="entry name" value="G_TR_1"/>
    <property type="match status" value="1"/>
</dbReference>
<dbReference type="PROSITE" id="PS51722">
    <property type="entry name" value="G_TR_2"/>
    <property type="match status" value="1"/>
</dbReference>
<keyword id="KW-0963">Cytoplasm</keyword>
<keyword id="KW-0251">Elongation factor</keyword>
<keyword id="KW-0342">GTP-binding</keyword>
<keyword id="KW-0378">Hydrolase</keyword>
<keyword id="KW-0460">Magnesium</keyword>
<keyword id="KW-0479">Metal-binding</keyword>
<keyword id="KW-0547">Nucleotide-binding</keyword>
<keyword id="KW-0648">Protein biosynthesis</keyword>
<keyword id="KW-1185">Reference proteome</keyword>
<sequence>MAVAFNRDKPHCNIGTIGHVDHGKTSLATAITIVSSELSDGAVKVKNYDEIDSAPEERARGITIQTAHVEFISKKRHYALVDCPGHVDYIKNMITGASQTDGLILVVSGVDGVMPQTREHVLLAKQVGVPSIIVCINKIDQADPELLELIEMEVRELLTKYDFPGDTVPIIRCSALKAINGDSDAKKGILELMDAIDDYIPQPTRVLDQPFLMPIEDVFSILGRGTVVTGRIERGVIKVGDEVEIVGLRSTQKTICTGVEMFKKELDQGQAGDNVGILLRGIKREDVERGQVLAKPGTITPHCSFEAEVYVLTKEEGGRHTPFFQNYRPQFYCRTTDVTGEIALLSGKEMVMPGDHATLSVNLVAPIAMDQGLSFAIREGGKTIGAGKVSKIIK</sequence>
<organism>
    <name type="scientific">Orientia tsutsugamushi (strain Boryong)</name>
    <name type="common">Rickettsia tsutsugamushi</name>
    <dbReference type="NCBI Taxonomy" id="357244"/>
    <lineage>
        <taxon>Bacteria</taxon>
        <taxon>Pseudomonadati</taxon>
        <taxon>Pseudomonadota</taxon>
        <taxon>Alphaproteobacteria</taxon>
        <taxon>Rickettsiales</taxon>
        <taxon>Rickettsiaceae</taxon>
        <taxon>Rickettsieae</taxon>
        <taxon>Orientia</taxon>
    </lineage>
</organism>
<gene>
    <name evidence="2" type="primary">tuf1</name>
    <name type="ordered locus">OTBS_0215</name>
</gene>
<accession>A5CCA0</accession>
<reference key="1">
    <citation type="journal article" date="2007" name="Proc. Natl. Acad. Sci. U.S.A.">
        <title>The Orientia tsutsugamushi genome reveals massive proliferation of conjugative type IV secretion system and host-cell interaction genes.</title>
        <authorList>
            <person name="Cho N.-H."/>
            <person name="Kim H.-R."/>
            <person name="Lee J.-H."/>
            <person name="Kim S.-Y."/>
            <person name="Kim J."/>
            <person name="Cha S."/>
            <person name="Kim S.-Y."/>
            <person name="Darby A.C."/>
            <person name="Fuxelius H.-H."/>
            <person name="Yin J."/>
            <person name="Kim J.H."/>
            <person name="Kim J."/>
            <person name="Lee S.J."/>
            <person name="Koh Y.-S."/>
            <person name="Jang W.-J."/>
            <person name="Park K.-H."/>
            <person name="Andersson S.G.E."/>
            <person name="Choi M.-S."/>
            <person name="Kim I.-S."/>
        </authorList>
    </citation>
    <scope>NUCLEOTIDE SEQUENCE [LARGE SCALE GENOMIC DNA]</scope>
    <source>
        <strain>Boryong</strain>
    </source>
</reference>
<protein>
    <recommendedName>
        <fullName evidence="2">Elongation factor Tu 1</fullName>
        <shortName evidence="2">EF-Tu 1</shortName>
        <ecNumber evidence="2">3.6.5.3</ecNumber>
    </recommendedName>
</protein>
<feature type="chain" id="PRO_0000337451" description="Elongation factor Tu 1">
    <location>
        <begin position="1"/>
        <end position="394"/>
    </location>
</feature>
<feature type="domain" description="tr-type G">
    <location>
        <begin position="9"/>
        <end position="204"/>
    </location>
</feature>
<feature type="region of interest" description="G1" evidence="1">
    <location>
        <begin position="18"/>
        <end position="25"/>
    </location>
</feature>
<feature type="region of interest" description="G2" evidence="1">
    <location>
        <begin position="61"/>
        <end position="65"/>
    </location>
</feature>
<feature type="region of interest" description="G3" evidence="1">
    <location>
        <begin position="82"/>
        <end position="85"/>
    </location>
</feature>
<feature type="region of interest" description="G4" evidence="1">
    <location>
        <begin position="137"/>
        <end position="140"/>
    </location>
</feature>
<feature type="region of interest" description="G5" evidence="1">
    <location>
        <begin position="174"/>
        <end position="176"/>
    </location>
</feature>
<feature type="binding site" evidence="2">
    <location>
        <begin position="18"/>
        <end position="25"/>
    </location>
    <ligand>
        <name>GTP</name>
        <dbReference type="ChEBI" id="CHEBI:37565"/>
    </ligand>
</feature>
<feature type="binding site" evidence="2">
    <location>
        <position position="25"/>
    </location>
    <ligand>
        <name>Mg(2+)</name>
        <dbReference type="ChEBI" id="CHEBI:18420"/>
    </ligand>
</feature>
<feature type="binding site" evidence="2">
    <location>
        <begin position="82"/>
        <end position="86"/>
    </location>
    <ligand>
        <name>GTP</name>
        <dbReference type="ChEBI" id="CHEBI:37565"/>
    </ligand>
</feature>
<feature type="binding site" evidence="2">
    <location>
        <begin position="137"/>
        <end position="140"/>
    </location>
    <ligand>
        <name>GTP</name>
        <dbReference type="ChEBI" id="CHEBI:37565"/>
    </ligand>
</feature>